<comment type="function">
    <text evidence="1">Catalyzes the transfer of a methyl group from 5-methyltetrahydrofolate to homocysteine resulting in methionine formation.</text>
</comment>
<comment type="catalytic activity">
    <reaction evidence="1">
        <text>5-methyltetrahydropteroyltri-L-glutamate + L-homocysteine = tetrahydropteroyltri-L-glutamate + L-methionine</text>
        <dbReference type="Rhea" id="RHEA:21196"/>
        <dbReference type="ChEBI" id="CHEBI:57844"/>
        <dbReference type="ChEBI" id="CHEBI:58140"/>
        <dbReference type="ChEBI" id="CHEBI:58199"/>
        <dbReference type="ChEBI" id="CHEBI:58207"/>
        <dbReference type="EC" id="2.1.1.14"/>
    </reaction>
</comment>
<comment type="cofactor">
    <cofactor evidence="1">
        <name>Zn(2+)</name>
        <dbReference type="ChEBI" id="CHEBI:29105"/>
    </cofactor>
    <text evidence="1">Binds 1 zinc ion per subunit.</text>
</comment>
<comment type="pathway">
    <text evidence="1">Amino-acid biosynthesis; L-methionine biosynthesis via de novo pathway; L-methionine from L-homocysteine (MetE route): step 1/1.</text>
</comment>
<comment type="miscellaneous">
    <text>Present in outer membrane vesicle formulations which are used as vaccines in human.</text>
</comment>
<comment type="similarity">
    <text evidence="1 2">Belongs to the vitamin-B12 independent methionine synthase family.</text>
</comment>
<proteinExistence type="evidence at protein level"/>
<reference key="1">
    <citation type="journal article" date="2000" name="Science">
        <title>Complete genome sequence of Neisseria meningitidis serogroup B strain MC58.</title>
        <authorList>
            <person name="Tettelin H."/>
            <person name="Saunders N.J."/>
            <person name="Heidelberg J.F."/>
            <person name="Jeffries A.C."/>
            <person name="Nelson K.E."/>
            <person name="Eisen J.A."/>
            <person name="Ketchum K.A."/>
            <person name="Hood D.W."/>
            <person name="Peden J.F."/>
            <person name="Dodson R.J."/>
            <person name="Nelson W.C."/>
            <person name="Gwinn M.L."/>
            <person name="DeBoy R.T."/>
            <person name="Peterson J.D."/>
            <person name="Hickey E.K."/>
            <person name="Haft D.H."/>
            <person name="Salzberg S.L."/>
            <person name="White O."/>
            <person name="Fleischmann R.D."/>
            <person name="Dougherty B.A."/>
            <person name="Mason T.M."/>
            <person name="Ciecko A."/>
            <person name="Parksey D.S."/>
            <person name="Blair E."/>
            <person name="Cittone H."/>
            <person name="Clark E.B."/>
            <person name="Cotton M.D."/>
            <person name="Utterback T.R."/>
            <person name="Khouri H.M."/>
            <person name="Qin H."/>
            <person name="Vamathevan J.J."/>
            <person name="Gill J."/>
            <person name="Scarlato V."/>
            <person name="Masignani V."/>
            <person name="Pizza M."/>
            <person name="Grandi G."/>
            <person name="Sun L."/>
            <person name="Smith H.O."/>
            <person name="Fraser C.M."/>
            <person name="Moxon E.R."/>
            <person name="Rappuoli R."/>
            <person name="Venter J.C."/>
        </authorList>
    </citation>
    <scope>NUCLEOTIDE SEQUENCE [LARGE SCALE GENOMIC DNA]</scope>
    <source>
        <strain>ATCC BAA-335 / MC58</strain>
    </source>
</reference>
<reference key="2">
    <citation type="journal article" date="2006" name="Proteomics">
        <title>Proteomic analysis of a meningococcal outer membrane vesicle vaccine prepared from the group B strain NZ98/254.</title>
        <authorList>
            <person name="Vipond C."/>
            <person name="Suker J."/>
            <person name="Jones C."/>
            <person name="Tang C."/>
            <person name="Feavers I.M."/>
            <person name="Wheeler J.X."/>
        </authorList>
    </citation>
    <scope>IDENTIFICATION BY MASS SPECTROMETRY [LARGE SCALE ANALYSIS]</scope>
    <source>
        <strain>NZ98/254 / Serogroup B</strain>
    </source>
</reference>
<name>METE_NEIMB</name>
<feature type="chain" id="PRO_0000098644" description="5-methyltetrahydropteroyltriglutamate--homocysteine methyltransferase">
    <location>
        <begin position="1"/>
        <end position="758"/>
    </location>
</feature>
<feature type="active site" description="Proton donor" evidence="1">
    <location>
        <position position="696"/>
    </location>
</feature>
<feature type="binding site" evidence="1">
    <location>
        <begin position="16"/>
        <end position="19"/>
    </location>
    <ligand>
        <name>5-methyltetrahydropteroyltri-L-glutamate</name>
        <dbReference type="ChEBI" id="CHEBI:58207"/>
    </ligand>
</feature>
<feature type="binding site" evidence="1">
    <location>
        <position position="112"/>
    </location>
    <ligand>
        <name>5-methyltetrahydropteroyltri-L-glutamate</name>
        <dbReference type="ChEBI" id="CHEBI:58207"/>
    </ligand>
</feature>
<feature type="binding site" evidence="1">
    <location>
        <begin position="433"/>
        <end position="435"/>
    </location>
    <ligand>
        <name>L-homocysteine</name>
        <dbReference type="ChEBI" id="CHEBI:58199"/>
    </ligand>
</feature>
<feature type="binding site" evidence="1">
    <location>
        <begin position="433"/>
        <end position="435"/>
    </location>
    <ligand>
        <name>L-methionine</name>
        <dbReference type="ChEBI" id="CHEBI:57844"/>
    </ligand>
</feature>
<feature type="binding site" evidence="1">
    <location>
        <position position="486"/>
    </location>
    <ligand>
        <name>L-homocysteine</name>
        <dbReference type="ChEBI" id="CHEBI:58199"/>
    </ligand>
</feature>
<feature type="binding site" evidence="1">
    <location>
        <position position="486"/>
    </location>
    <ligand>
        <name>L-methionine</name>
        <dbReference type="ChEBI" id="CHEBI:57844"/>
    </ligand>
</feature>
<feature type="binding site" evidence="1">
    <location>
        <begin position="517"/>
        <end position="518"/>
    </location>
    <ligand>
        <name>5-methyltetrahydropteroyltri-L-glutamate</name>
        <dbReference type="ChEBI" id="CHEBI:58207"/>
    </ligand>
</feature>
<feature type="binding site" evidence="1">
    <location>
        <position position="563"/>
    </location>
    <ligand>
        <name>5-methyltetrahydropteroyltri-L-glutamate</name>
        <dbReference type="ChEBI" id="CHEBI:58207"/>
    </ligand>
</feature>
<feature type="binding site" evidence="1">
    <location>
        <position position="601"/>
    </location>
    <ligand>
        <name>L-homocysteine</name>
        <dbReference type="ChEBI" id="CHEBI:58199"/>
    </ligand>
</feature>
<feature type="binding site" evidence="1">
    <location>
        <position position="601"/>
    </location>
    <ligand>
        <name>L-methionine</name>
        <dbReference type="ChEBI" id="CHEBI:57844"/>
    </ligand>
</feature>
<feature type="binding site" evidence="1">
    <location>
        <position position="607"/>
    </location>
    <ligand>
        <name>5-methyltetrahydropteroyltri-L-glutamate</name>
        <dbReference type="ChEBI" id="CHEBI:58207"/>
    </ligand>
</feature>
<feature type="binding site" evidence="1">
    <location>
        <position position="643"/>
    </location>
    <ligand>
        <name>Zn(2+)</name>
        <dbReference type="ChEBI" id="CHEBI:29105"/>
        <note>catalytic</note>
    </ligand>
</feature>
<feature type="binding site" evidence="1">
    <location>
        <position position="645"/>
    </location>
    <ligand>
        <name>Zn(2+)</name>
        <dbReference type="ChEBI" id="CHEBI:29105"/>
        <note>catalytic</note>
    </ligand>
</feature>
<feature type="binding site" evidence="1">
    <location>
        <position position="667"/>
    </location>
    <ligand>
        <name>Zn(2+)</name>
        <dbReference type="ChEBI" id="CHEBI:29105"/>
        <note>catalytic</note>
    </ligand>
</feature>
<feature type="binding site" evidence="1">
    <location>
        <position position="728"/>
    </location>
    <ligand>
        <name>Zn(2+)</name>
        <dbReference type="ChEBI" id="CHEBI:29105"/>
        <note>catalytic</note>
    </ligand>
</feature>
<keyword id="KW-0028">Amino-acid biosynthesis</keyword>
<keyword id="KW-0479">Metal-binding</keyword>
<keyword id="KW-0486">Methionine biosynthesis</keyword>
<keyword id="KW-0489">Methyltransferase</keyword>
<keyword id="KW-1185">Reference proteome</keyword>
<keyword id="KW-0677">Repeat</keyword>
<keyword id="KW-0808">Transferase</keyword>
<keyword id="KW-0862">Zinc</keyword>
<protein>
    <recommendedName>
        <fullName evidence="1">5-methyltetrahydropteroyltriglutamate--homocysteine methyltransferase</fullName>
        <ecNumber evidence="1">2.1.1.14</ecNumber>
    </recommendedName>
    <alternativeName>
        <fullName evidence="1">Cobalamin-independent methionine synthase</fullName>
    </alternativeName>
    <alternativeName>
        <fullName evidence="1">Methionine synthase, vitamin-B12 independent isozyme</fullName>
    </alternativeName>
</protein>
<evidence type="ECO:0000255" key="1">
    <source>
        <dbReference type="HAMAP-Rule" id="MF_00172"/>
    </source>
</evidence>
<evidence type="ECO:0000305" key="2"/>
<accession>Q9JZQ2</accession>
<dbReference type="EC" id="2.1.1.14" evidence="1"/>
<dbReference type="EMBL" id="AE002098">
    <property type="protein sequence ID" value="AAF41350.1"/>
    <property type="molecule type" value="Genomic_DNA"/>
</dbReference>
<dbReference type="PIR" id="E81140">
    <property type="entry name" value="E81140"/>
</dbReference>
<dbReference type="RefSeq" id="NP_273982.1">
    <property type="nucleotide sequence ID" value="NC_003112.2"/>
</dbReference>
<dbReference type="RefSeq" id="WP_002223856.1">
    <property type="nucleotide sequence ID" value="NC_003112.2"/>
</dbReference>
<dbReference type="SMR" id="Q9JZQ2"/>
<dbReference type="FunCoup" id="Q9JZQ2">
    <property type="interactions" value="344"/>
</dbReference>
<dbReference type="STRING" id="122586.NMB0944"/>
<dbReference type="PaxDb" id="122586-NMB0944"/>
<dbReference type="KEGG" id="nme:NMB0944"/>
<dbReference type="PATRIC" id="fig|122586.8.peg.1199"/>
<dbReference type="HOGENOM" id="CLU_013175_0_0_4"/>
<dbReference type="InParanoid" id="Q9JZQ2"/>
<dbReference type="OrthoDB" id="244285at2"/>
<dbReference type="UniPathway" id="UPA00051">
    <property type="reaction ID" value="UER00082"/>
</dbReference>
<dbReference type="Proteomes" id="UP000000425">
    <property type="component" value="Chromosome"/>
</dbReference>
<dbReference type="GO" id="GO:0003871">
    <property type="term" value="F:5-methyltetrahydropteroyltriglutamate-homocysteine S-methyltransferase activity"/>
    <property type="evidence" value="ECO:0007669"/>
    <property type="project" value="UniProtKB-UniRule"/>
</dbReference>
<dbReference type="GO" id="GO:0008270">
    <property type="term" value="F:zinc ion binding"/>
    <property type="evidence" value="ECO:0007669"/>
    <property type="project" value="InterPro"/>
</dbReference>
<dbReference type="GO" id="GO:0009086">
    <property type="term" value="P:methionine biosynthetic process"/>
    <property type="evidence" value="ECO:0007669"/>
    <property type="project" value="UniProtKB-UniRule"/>
</dbReference>
<dbReference type="GO" id="GO:0032259">
    <property type="term" value="P:methylation"/>
    <property type="evidence" value="ECO:0007669"/>
    <property type="project" value="UniProtKB-KW"/>
</dbReference>
<dbReference type="CDD" id="cd03311">
    <property type="entry name" value="CIMS_C_terminal_like"/>
    <property type="match status" value="1"/>
</dbReference>
<dbReference type="CDD" id="cd03312">
    <property type="entry name" value="CIMS_N_terminal_like"/>
    <property type="match status" value="1"/>
</dbReference>
<dbReference type="FunFam" id="3.20.20.210:FF:000002">
    <property type="entry name" value="5-methyltetrahydropteroyltriglutamate--homocysteine methyltransferase"/>
    <property type="match status" value="1"/>
</dbReference>
<dbReference type="Gene3D" id="3.20.20.210">
    <property type="match status" value="2"/>
</dbReference>
<dbReference type="HAMAP" id="MF_00172">
    <property type="entry name" value="Meth_synth"/>
    <property type="match status" value="1"/>
</dbReference>
<dbReference type="InterPro" id="IPR013215">
    <property type="entry name" value="Cbl-indep_Met_Synth_N"/>
</dbReference>
<dbReference type="InterPro" id="IPR006276">
    <property type="entry name" value="Cobalamin-indep_Met_synthase"/>
</dbReference>
<dbReference type="InterPro" id="IPR002629">
    <property type="entry name" value="Met_Synth_C/arc"/>
</dbReference>
<dbReference type="InterPro" id="IPR038071">
    <property type="entry name" value="UROD/MetE-like_sf"/>
</dbReference>
<dbReference type="NCBIfam" id="TIGR01371">
    <property type="entry name" value="met_syn_B12ind"/>
    <property type="match status" value="1"/>
</dbReference>
<dbReference type="NCBIfam" id="NF003556">
    <property type="entry name" value="PRK05222.1"/>
    <property type="match status" value="1"/>
</dbReference>
<dbReference type="PANTHER" id="PTHR30519">
    <property type="entry name" value="5-METHYLTETRAHYDROPTEROYLTRIGLUTAMATE--HOMOCYSTEINE METHYLTRANSFERASE"/>
    <property type="match status" value="1"/>
</dbReference>
<dbReference type="Pfam" id="PF08267">
    <property type="entry name" value="Meth_synt_1"/>
    <property type="match status" value="1"/>
</dbReference>
<dbReference type="Pfam" id="PF01717">
    <property type="entry name" value="Meth_synt_2"/>
    <property type="match status" value="1"/>
</dbReference>
<dbReference type="PIRSF" id="PIRSF000382">
    <property type="entry name" value="MeTrfase_B12_ind"/>
    <property type="match status" value="1"/>
</dbReference>
<dbReference type="SUPFAM" id="SSF51726">
    <property type="entry name" value="UROD/MetE-like"/>
    <property type="match status" value="2"/>
</dbReference>
<organism>
    <name type="scientific">Neisseria meningitidis serogroup B (strain ATCC BAA-335 / MC58)</name>
    <dbReference type="NCBI Taxonomy" id="122586"/>
    <lineage>
        <taxon>Bacteria</taxon>
        <taxon>Pseudomonadati</taxon>
        <taxon>Pseudomonadota</taxon>
        <taxon>Betaproteobacteria</taxon>
        <taxon>Neisseriales</taxon>
        <taxon>Neisseriaceae</taxon>
        <taxon>Neisseria</taxon>
    </lineage>
</organism>
<gene>
    <name evidence="1" type="primary">metE</name>
    <name type="ordered locus">NMB0944</name>
</gene>
<sequence length="758" mass="85077">MTTLHFSGFPRVGAFRELKFAQEKYWRKEISEQELLAVAKDLREKNWKHQVAANADFVAVGDFTFYDHILDLQVATGAIPARFGFDSQNLSLEQFFQLARGNKDQFAIEMTKWFDTNYHYLVPEFHADTEFKANAKHYVQQLQEAQALGLKAKPTVVGPLTFLWVGKEKGAVEFDRLSLLPKLLPVYVEILTALVEAGAEWIQIDEPALAVDLPKEWVEAYKDVYATLSKVSAKILLSTYFGSVAEHAALLKALPVDGLHIDLVRAPEQLDAFADYDKVLSAGVIDGRNIWRANLNKVLETVEPLQAKLGDRLWISSSCSLLHTPFDLSVEEKLKANKPDLYSWLAFTLQKTQELRVLKAALNEGRDSVAEELAASQAAADSRANSSEIHRADVAKRLADLPANADQRKSPFADRIKAQQAWLNLPLLPTTNIGSFPQTTEIRQARSAFKKGELSAADYEAAMKKEIALVVEEQEKLDLDVLVHGEAERNDMVEYFGELLSGFAFTQYGWVQSYGSRCVKPPIIFGDVSRPEAMTVAWSTYAQSLTKRPMKGMLTGPVTILQWSFVRNDIPRSTVCKQIALALNDEVLDLEKAGIKVIQIDEPAIREGLPLKRADWDAYLNWAGESFRLSSAGCEDSTQIHTHMCYSEFNDILPAIAAMDADVITIETSRSDMELLTAFGEFQYPNDIGPGVYDIHSPRVPTEAEVEHLLRKAIEVVPVERLWVNPDCGLKTRGWKETLEQLQVMMNVTRKLRAELAK</sequence>